<evidence type="ECO:0000269" key="1">
    <source>
    </source>
</evidence>
<evidence type="ECO:0000269" key="2">
    <source>
    </source>
</evidence>
<evidence type="ECO:0000269" key="3">
    <source ref="4"/>
</evidence>
<evidence type="ECO:0000269" key="4">
    <source ref="8"/>
</evidence>
<evidence type="ECO:0000303" key="5">
    <source>
    </source>
</evidence>
<evidence type="ECO:0000305" key="6"/>
<evidence type="ECO:0007744" key="7">
    <source>
        <dbReference type="PDB" id="4B4O"/>
    </source>
</evidence>
<evidence type="ECO:0007829" key="8">
    <source>
        <dbReference type="PDB" id="4B4O"/>
    </source>
</evidence>
<accession>Q9NRG7</accession>
<accession>Q6ZW71</accession>
<accession>Q9BVQ3</accession>
<sequence length="293" mass="31077">MRVLVGGGTGFIGTALTQLLNARGHEVTLVSRKPGPGRITWDELAASGLPSCDAAVNLAGENILNPLRRWNETFQKEVIGSRLETTQLLAKAITKAPQPPKAWVLVTGVAYYQPSLTAEYDEDSPGGDFDFFSNLVTKWEAAARLPGDSTRQVVVRSGVVLGRGGGAMGHMLLPFRLGLGGPIGSGHQFFPWIHIGDLAGILTHALEANHVHGVLNGVAPSSATNAEFAQTLGAALGRRAFIPLPSAVVQAVFGRQRAIMLLEGQKVIPQRTLATGYQYSFPELGAALKEIVA</sequence>
<organism>
    <name type="scientific">Homo sapiens</name>
    <name type="common">Human</name>
    <dbReference type="NCBI Taxonomy" id="9606"/>
    <lineage>
        <taxon>Eukaryota</taxon>
        <taxon>Metazoa</taxon>
        <taxon>Chordata</taxon>
        <taxon>Craniata</taxon>
        <taxon>Vertebrata</taxon>
        <taxon>Euteleostomi</taxon>
        <taxon>Mammalia</taxon>
        <taxon>Eutheria</taxon>
        <taxon>Euarchontoglires</taxon>
        <taxon>Primates</taxon>
        <taxon>Haplorrhini</taxon>
        <taxon>Catarrhini</taxon>
        <taxon>Hominidae</taxon>
        <taxon>Homo</taxon>
    </lineage>
</organism>
<reference key="1">
    <citation type="journal article" date="2004" name="Nat. Genet.">
        <title>Complete sequencing and characterization of 21,243 full-length human cDNAs.</title>
        <authorList>
            <person name="Ota T."/>
            <person name="Suzuki Y."/>
            <person name="Nishikawa T."/>
            <person name="Otsuki T."/>
            <person name="Sugiyama T."/>
            <person name="Irie R."/>
            <person name="Wakamatsu A."/>
            <person name="Hayashi K."/>
            <person name="Sato H."/>
            <person name="Nagai K."/>
            <person name="Kimura K."/>
            <person name="Makita H."/>
            <person name="Sekine M."/>
            <person name="Obayashi M."/>
            <person name="Nishi T."/>
            <person name="Shibahara T."/>
            <person name="Tanaka T."/>
            <person name="Ishii S."/>
            <person name="Yamamoto J."/>
            <person name="Saito K."/>
            <person name="Kawai Y."/>
            <person name="Isono Y."/>
            <person name="Nakamura Y."/>
            <person name="Nagahari K."/>
            <person name="Murakami K."/>
            <person name="Yasuda T."/>
            <person name="Iwayanagi T."/>
            <person name="Wagatsuma M."/>
            <person name="Shiratori A."/>
            <person name="Sudo H."/>
            <person name="Hosoiri T."/>
            <person name="Kaku Y."/>
            <person name="Kodaira H."/>
            <person name="Kondo H."/>
            <person name="Sugawara M."/>
            <person name="Takahashi M."/>
            <person name="Kanda K."/>
            <person name="Yokoi T."/>
            <person name="Furuya T."/>
            <person name="Kikkawa E."/>
            <person name="Omura Y."/>
            <person name="Abe K."/>
            <person name="Kamihara K."/>
            <person name="Katsuta N."/>
            <person name="Sato K."/>
            <person name="Tanikawa M."/>
            <person name="Yamazaki M."/>
            <person name="Ninomiya K."/>
            <person name="Ishibashi T."/>
            <person name="Yamashita H."/>
            <person name="Murakawa K."/>
            <person name="Fujimori K."/>
            <person name="Tanai H."/>
            <person name="Kimata M."/>
            <person name="Watanabe M."/>
            <person name="Hiraoka S."/>
            <person name="Chiba Y."/>
            <person name="Ishida S."/>
            <person name="Ono Y."/>
            <person name="Takiguchi S."/>
            <person name="Watanabe S."/>
            <person name="Yosida M."/>
            <person name="Hotuta T."/>
            <person name="Kusano J."/>
            <person name="Kanehori K."/>
            <person name="Takahashi-Fujii A."/>
            <person name="Hara H."/>
            <person name="Tanase T.-O."/>
            <person name="Nomura Y."/>
            <person name="Togiya S."/>
            <person name="Komai F."/>
            <person name="Hara R."/>
            <person name="Takeuchi K."/>
            <person name="Arita M."/>
            <person name="Imose N."/>
            <person name="Musashino K."/>
            <person name="Yuuki H."/>
            <person name="Oshima A."/>
            <person name="Sasaki N."/>
            <person name="Aotsuka S."/>
            <person name="Yoshikawa Y."/>
            <person name="Matsunawa H."/>
            <person name="Ichihara T."/>
            <person name="Shiohata N."/>
            <person name="Sano S."/>
            <person name="Moriya S."/>
            <person name="Momiyama H."/>
            <person name="Satoh N."/>
            <person name="Takami S."/>
            <person name="Terashima Y."/>
            <person name="Suzuki O."/>
            <person name="Nakagawa S."/>
            <person name="Senoh A."/>
            <person name="Mizoguchi H."/>
            <person name="Goto Y."/>
            <person name="Shimizu F."/>
            <person name="Wakebe H."/>
            <person name="Hishigaki H."/>
            <person name="Watanabe T."/>
            <person name="Sugiyama A."/>
            <person name="Takemoto M."/>
            <person name="Kawakami B."/>
            <person name="Yamazaki M."/>
            <person name="Watanabe K."/>
            <person name="Kumagai A."/>
            <person name="Itakura S."/>
            <person name="Fukuzumi Y."/>
            <person name="Fujimori Y."/>
            <person name="Komiyama M."/>
            <person name="Tashiro H."/>
            <person name="Tanigami A."/>
            <person name="Fujiwara T."/>
            <person name="Ono T."/>
            <person name="Yamada K."/>
            <person name="Fujii Y."/>
            <person name="Ozaki K."/>
            <person name="Hirao M."/>
            <person name="Ohmori Y."/>
            <person name="Kawabata A."/>
            <person name="Hikiji T."/>
            <person name="Kobatake N."/>
            <person name="Inagaki H."/>
            <person name="Ikema Y."/>
            <person name="Okamoto S."/>
            <person name="Okitani R."/>
            <person name="Kawakami T."/>
            <person name="Noguchi S."/>
            <person name="Itoh T."/>
            <person name="Shigeta K."/>
            <person name="Senba T."/>
            <person name="Matsumura K."/>
            <person name="Nakajima Y."/>
            <person name="Mizuno T."/>
            <person name="Morinaga M."/>
            <person name="Sasaki M."/>
            <person name="Togashi T."/>
            <person name="Oyama M."/>
            <person name="Hata H."/>
            <person name="Watanabe M."/>
            <person name="Komatsu T."/>
            <person name="Mizushima-Sugano J."/>
            <person name="Satoh T."/>
            <person name="Shirai Y."/>
            <person name="Takahashi Y."/>
            <person name="Nakagawa K."/>
            <person name="Okumura K."/>
            <person name="Nagase T."/>
            <person name="Nomura N."/>
            <person name="Kikuchi H."/>
            <person name="Masuho Y."/>
            <person name="Yamashita R."/>
            <person name="Nakai K."/>
            <person name="Yada T."/>
            <person name="Nakamura Y."/>
            <person name="Ohara O."/>
            <person name="Isogai T."/>
            <person name="Sugano S."/>
        </authorList>
    </citation>
    <scope>NUCLEOTIDE SEQUENCE [LARGE SCALE MRNA] (ISOFORM 2)</scope>
    <scope>VARIANT VAL-181</scope>
    <source>
        <tissue>Thalamus</tissue>
    </source>
</reference>
<reference key="2">
    <citation type="journal article" date="2003" name="Nature">
        <title>The DNA sequence and analysis of human chromosome 14.</title>
        <authorList>
            <person name="Heilig R."/>
            <person name="Eckenberg R."/>
            <person name="Petit J.-L."/>
            <person name="Fonknechten N."/>
            <person name="Da Silva C."/>
            <person name="Cattolico L."/>
            <person name="Levy M."/>
            <person name="Barbe V."/>
            <person name="De Berardinis V."/>
            <person name="Ureta-Vidal A."/>
            <person name="Pelletier E."/>
            <person name="Vico V."/>
            <person name="Anthouard V."/>
            <person name="Rowen L."/>
            <person name="Madan A."/>
            <person name="Qin S."/>
            <person name="Sun H."/>
            <person name="Du H."/>
            <person name="Pepin K."/>
            <person name="Artiguenave F."/>
            <person name="Robert C."/>
            <person name="Cruaud C."/>
            <person name="Bruels T."/>
            <person name="Jaillon O."/>
            <person name="Friedlander L."/>
            <person name="Samson G."/>
            <person name="Brottier P."/>
            <person name="Cure S."/>
            <person name="Segurens B."/>
            <person name="Aniere F."/>
            <person name="Samain S."/>
            <person name="Crespeau H."/>
            <person name="Abbasi N."/>
            <person name="Aiach N."/>
            <person name="Boscus D."/>
            <person name="Dickhoff R."/>
            <person name="Dors M."/>
            <person name="Dubois I."/>
            <person name="Friedman C."/>
            <person name="Gouyvenoux M."/>
            <person name="James R."/>
            <person name="Madan A."/>
            <person name="Mairey-Estrada B."/>
            <person name="Mangenot S."/>
            <person name="Martins N."/>
            <person name="Menard M."/>
            <person name="Oztas S."/>
            <person name="Ratcliffe A."/>
            <person name="Shaffer T."/>
            <person name="Trask B."/>
            <person name="Vacherie B."/>
            <person name="Bellemere C."/>
            <person name="Belser C."/>
            <person name="Besnard-Gonnet M."/>
            <person name="Bartol-Mavel D."/>
            <person name="Boutard M."/>
            <person name="Briez-Silla S."/>
            <person name="Combette S."/>
            <person name="Dufosse-Laurent V."/>
            <person name="Ferron C."/>
            <person name="Lechaplais C."/>
            <person name="Louesse C."/>
            <person name="Muselet D."/>
            <person name="Magdelenat G."/>
            <person name="Pateau E."/>
            <person name="Petit E."/>
            <person name="Sirvain-Trukniewicz P."/>
            <person name="Trybou A."/>
            <person name="Vega-Czarny N."/>
            <person name="Bataille E."/>
            <person name="Bluet E."/>
            <person name="Bordelais I."/>
            <person name="Dubois M."/>
            <person name="Dumont C."/>
            <person name="Guerin T."/>
            <person name="Haffray S."/>
            <person name="Hammadi R."/>
            <person name="Muanga J."/>
            <person name="Pellouin V."/>
            <person name="Robert D."/>
            <person name="Wunderle E."/>
            <person name="Gauguet G."/>
            <person name="Roy A."/>
            <person name="Sainte-Marthe L."/>
            <person name="Verdier J."/>
            <person name="Verdier-Discala C."/>
            <person name="Hillier L.W."/>
            <person name="Fulton L."/>
            <person name="McPherson J."/>
            <person name="Matsuda F."/>
            <person name="Wilson R."/>
            <person name="Scarpelli C."/>
            <person name="Gyapay G."/>
            <person name="Wincker P."/>
            <person name="Saurin W."/>
            <person name="Quetier F."/>
            <person name="Waterston R."/>
            <person name="Hood L."/>
            <person name="Weissenbach J."/>
        </authorList>
    </citation>
    <scope>NUCLEOTIDE SEQUENCE [LARGE SCALE GENOMIC DNA]</scope>
</reference>
<reference key="3">
    <citation type="journal article" date="2004" name="Genome Res.">
        <title>The status, quality, and expansion of the NIH full-length cDNA project: the Mammalian Gene Collection (MGC).</title>
        <authorList>
            <consortium name="The MGC Project Team"/>
        </authorList>
    </citation>
    <scope>NUCLEOTIDE SEQUENCE [LARGE SCALE MRNA] (ISOFORM 1)</scope>
    <scope>VARIANTS LEU-79; PHE-232 AND ARG-270</scope>
    <source>
        <tissue>Placenta</tissue>
    </source>
</reference>
<reference key="4">
    <citation type="submission" date="2000-01" db="EMBL/GenBank/DDBJ databases">
        <title>A novel gene expressed in human adrenal gland.</title>
        <authorList>
            <person name="Li Y."/>
            <person name="Wu T."/>
            <person name="Xu S."/>
            <person name="Ren S."/>
            <person name="Chen Z."/>
            <person name="Han Z."/>
        </authorList>
    </citation>
    <scope>NUCLEOTIDE SEQUENCE [MRNA] OF 6-293 (ISOFORM 1)</scope>
    <scope>VARIANT LEU-79</scope>
    <source>
        <tissue>Adrenal gland</tissue>
    </source>
</reference>
<reference key="5">
    <citation type="journal article" date="2009" name="Chem. Biol. Interact.">
        <title>The SDR (short-chain dehydrogenase/reductase and related enzymes) nomenclature initiative.</title>
        <authorList>
            <person name="Persson B."/>
            <person name="Kallberg Y."/>
            <person name="Bray J.E."/>
            <person name="Bruford E."/>
            <person name="Dellaporta S.L."/>
            <person name="Favia A.D."/>
            <person name="Duarte R.G."/>
            <person name="Joernvall H."/>
            <person name="Kavanagh K.L."/>
            <person name="Kedishvili N."/>
            <person name="Kisiela M."/>
            <person name="Maser E."/>
            <person name="Mindnich R."/>
            <person name="Orchard S."/>
            <person name="Penning T.M."/>
            <person name="Thornton J.M."/>
            <person name="Adamski J."/>
            <person name="Oppermann U."/>
        </authorList>
    </citation>
    <scope>NOMENCLATURE</scope>
</reference>
<reference key="6">
    <citation type="journal article" date="2011" name="BMC Syst. Biol.">
        <title>Initial characterization of the human central proteome.</title>
        <authorList>
            <person name="Burkard T.R."/>
            <person name="Planyavsky M."/>
            <person name="Kaupe I."/>
            <person name="Breitwieser F.P."/>
            <person name="Buerckstuemmer T."/>
            <person name="Bennett K.L."/>
            <person name="Superti-Furga G."/>
            <person name="Colinge J."/>
        </authorList>
    </citation>
    <scope>IDENTIFICATION BY MASS SPECTROMETRY [LARGE SCALE ANALYSIS]</scope>
</reference>
<reference key="7">
    <citation type="journal article" date="2015" name="Proteomics">
        <title>N-terminome analysis of the human mitochondrial proteome.</title>
        <authorList>
            <person name="Vaca Jacome A.S."/>
            <person name="Rabilloud T."/>
            <person name="Schaeffer-Reiss C."/>
            <person name="Rompais M."/>
            <person name="Ayoub D."/>
            <person name="Lane L."/>
            <person name="Bairoch A."/>
            <person name="Van Dorsselaer A."/>
            <person name="Carapito C."/>
        </authorList>
    </citation>
    <scope>IDENTIFICATION BY MASS SPECTROMETRY [LARGE SCALE ANALYSIS]</scope>
</reference>
<reference key="8">
    <citation type="submission" date="2012-08" db="PDB data bank">
        <title>Crystal structure of human epimerase family protein SDR39U1 (isoform2) with NADPH.</title>
        <authorList>
            <consortium name="Structural genomics consortium (SGC)"/>
        </authorList>
    </citation>
    <scope>X-RAY CRYSTALLOGRAPHY (2.7 ANGSTROMS) OF 25-291 (ISOFORM 1) IN COMPLEX WITH NADPH</scope>
    <scope>PUTATIVE FUNCTION</scope>
</reference>
<keyword id="KW-0002">3D-structure</keyword>
<keyword id="KW-0025">Alternative splicing</keyword>
<keyword id="KW-0521">NADP</keyword>
<keyword id="KW-0560">Oxidoreductase</keyword>
<keyword id="KW-1267">Proteomics identification</keyword>
<keyword id="KW-1185">Reference proteome</keyword>
<name>D39U1_HUMAN</name>
<feature type="chain" id="PRO_0000279748" description="Epimerase family protein SDR39U1">
    <location>
        <begin position="1"/>
        <end position="293"/>
    </location>
</feature>
<feature type="binding site" evidence="4 7">
    <location>
        <begin position="31"/>
        <end position="32"/>
    </location>
    <ligand>
        <name>NADP(+)</name>
        <dbReference type="ChEBI" id="CHEBI:58349"/>
    </ligand>
</feature>
<feature type="binding site" evidence="4 7">
    <location>
        <begin position="58"/>
        <end position="59"/>
    </location>
    <ligand>
        <name>NADP(+)</name>
        <dbReference type="ChEBI" id="CHEBI:58349"/>
    </ligand>
</feature>
<feature type="binding site" evidence="4 7">
    <location>
        <position position="77"/>
    </location>
    <ligand>
        <name>NADP(+)</name>
        <dbReference type="ChEBI" id="CHEBI:58349"/>
    </ligand>
</feature>
<feature type="binding site" evidence="4 7">
    <location>
        <position position="82"/>
    </location>
    <ligand>
        <name>NADP(+)</name>
        <dbReference type="ChEBI" id="CHEBI:58349"/>
    </ligand>
</feature>
<feature type="binding site" evidence="4 7">
    <location>
        <position position="160"/>
    </location>
    <ligand>
        <name>NADP(+)</name>
        <dbReference type="ChEBI" id="CHEBI:58349"/>
    </ligand>
</feature>
<feature type="splice variant" id="VSP_060049" description="In isoform 2.">
    <location>
        <begin position="1"/>
        <end position="95"/>
    </location>
</feature>
<feature type="splice variant" id="VSP_060050" description="In isoform 2.">
    <original>APQPPKAWVLVTGV</original>
    <variation>MALSPNGEILRARE</variation>
    <location>
        <begin position="96"/>
        <end position="109"/>
    </location>
</feature>
<feature type="sequence variant" id="VAR_060623" description="In dbSNP:rs11625819." evidence="2 3">
    <original>I</original>
    <variation>L</variation>
    <location>
        <position position="79"/>
    </location>
</feature>
<feature type="sequence variant" id="VAR_057465" description="In dbSNP:rs11538256." evidence="1">
    <original>G</original>
    <variation>V</variation>
    <location>
        <position position="181"/>
    </location>
</feature>
<feature type="sequence variant" id="VAR_057466" description="In dbSNP:rs3211056." evidence="2">
    <original>L</original>
    <variation>F</variation>
    <location>
        <position position="232"/>
    </location>
</feature>
<feature type="sequence variant" id="VAR_060624" description="In dbSNP:rs1043831." evidence="2">
    <original>Q</original>
    <variation>R</variation>
    <location>
        <position position="270"/>
    </location>
</feature>
<feature type="strand" evidence="8">
    <location>
        <begin position="2"/>
        <end position="6"/>
    </location>
</feature>
<feature type="turn" evidence="8">
    <location>
        <begin position="7"/>
        <end position="9"/>
    </location>
</feature>
<feature type="helix" evidence="8">
    <location>
        <begin position="11"/>
        <end position="22"/>
    </location>
</feature>
<feature type="strand" evidence="8">
    <location>
        <begin position="26"/>
        <end position="33"/>
    </location>
</feature>
<feature type="strand" evidence="8">
    <location>
        <begin position="38"/>
        <end position="40"/>
    </location>
</feature>
<feature type="helix" evidence="8">
    <location>
        <begin position="41"/>
        <end position="47"/>
    </location>
</feature>
<feature type="strand" evidence="8">
    <location>
        <begin position="53"/>
        <end position="57"/>
    </location>
</feature>
<feature type="helix" evidence="8">
    <location>
        <begin position="72"/>
        <end position="95"/>
    </location>
</feature>
<feature type="strand" evidence="8">
    <location>
        <begin position="101"/>
        <end position="108"/>
    </location>
</feature>
<feature type="helix" evidence="8">
    <location>
        <begin position="109"/>
        <end position="111"/>
    </location>
</feature>
<feature type="helix" evidence="8">
    <location>
        <begin position="131"/>
        <end position="143"/>
    </location>
</feature>
<feature type="strand" evidence="8">
    <location>
        <begin position="146"/>
        <end position="157"/>
    </location>
</feature>
<feature type="strand" evidence="8">
    <location>
        <begin position="159"/>
        <end position="161"/>
    </location>
</feature>
<feature type="helix" evidence="8">
    <location>
        <begin position="166"/>
        <end position="176"/>
    </location>
</feature>
<feature type="strand" evidence="8">
    <location>
        <begin position="192"/>
        <end position="194"/>
    </location>
</feature>
<feature type="helix" evidence="8">
    <location>
        <begin position="195"/>
        <end position="207"/>
    </location>
</feature>
<feature type="strand" evidence="8">
    <location>
        <begin position="213"/>
        <end position="218"/>
    </location>
</feature>
<feature type="helix" evidence="8">
    <location>
        <begin position="225"/>
        <end position="236"/>
    </location>
</feature>
<feature type="helix" evidence="8">
    <location>
        <begin position="246"/>
        <end position="253"/>
    </location>
</feature>
<feature type="helix" evidence="8">
    <location>
        <begin position="255"/>
        <end position="262"/>
    </location>
</feature>
<feature type="helix" evidence="8">
    <location>
        <begin position="270"/>
        <end position="274"/>
    </location>
</feature>
<feature type="helix" evidence="8">
    <location>
        <begin position="284"/>
        <end position="291"/>
    </location>
</feature>
<comment type="function">
    <text evidence="6">Putative NADP-dependent oxidoreductase.</text>
</comment>
<comment type="alternative products">
    <event type="alternative splicing"/>
    <isoform>
        <id>Q9NRG7-2</id>
        <name>1</name>
        <sequence type="displayed"/>
    </isoform>
    <isoform>
        <id>Q9NRG7-3</id>
        <name>2</name>
        <sequence type="described" ref="VSP_060049 VSP_060050"/>
    </isoform>
</comment>
<comment type="tissue specificity">
    <text>Expressed in adrenal gland.</text>
</comment>
<comment type="miscellaneous">
    <text>Despite its name, it shares more sequence similarity with the sugar epimerase family than with the short-chain dehydrogenases/reductases (SDR) family.</text>
</comment>
<comment type="similarity">
    <text evidence="6">Belongs to the NAD(P)-dependent epimerase/dehydratase family. SDR39U1 subfamily.</text>
</comment>
<comment type="sequence caution" evidence="6">
    <conflict type="frameshift">
        <sequence resource="EMBL-CDS" id="AAF86950"/>
    </conflict>
</comment>
<comment type="sequence caution" evidence="6">
    <conflict type="miscellaneous discrepancy">
        <sequence resource="EMBL-CDS" id="AAF86950"/>
    </conflict>
    <text>Intron retention at the N-terminus.</text>
</comment>
<protein>
    <recommendedName>
        <fullName evidence="6">Epimerase family protein SDR39U1</fullName>
        <ecNumber>1.1.1.-</ecNumber>
    </recommendedName>
    <alternativeName>
        <fullName evidence="5">Short-chain dehydrogenase/reductase family 39U member 1</fullName>
    </alternativeName>
</protein>
<dbReference type="EC" id="1.1.1.-"/>
<dbReference type="EMBL" id="AK123513">
    <property type="status" value="NOT_ANNOTATED_CDS"/>
    <property type="molecule type" value="mRNA"/>
</dbReference>
<dbReference type="EMBL" id="AL132800">
    <property type="status" value="NOT_ANNOTATED_CDS"/>
    <property type="molecule type" value="Genomic_DNA"/>
</dbReference>
<dbReference type="EMBL" id="BC000989">
    <property type="protein sequence ID" value="AAH00989.1"/>
    <property type="molecule type" value="mRNA"/>
</dbReference>
<dbReference type="EMBL" id="AF226050">
    <property type="protein sequence ID" value="AAF86950.1"/>
    <property type="status" value="ALT_SEQ"/>
    <property type="molecule type" value="mRNA"/>
</dbReference>
<dbReference type="CCDS" id="CCDS45091.1">
    <molecule id="Q9NRG7-2"/>
</dbReference>
<dbReference type="RefSeq" id="NP_001277221.1">
    <property type="nucleotide sequence ID" value="NM_001290292.1"/>
</dbReference>
<dbReference type="RefSeq" id="NP_001295004.1">
    <property type="nucleotide sequence ID" value="NM_001308075.1"/>
</dbReference>
<dbReference type="RefSeq" id="NP_064580.2">
    <molecule id="Q9NRG7-2"/>
    <property type="nucleotide sequence ID" value="NM_020195.3"/>
</dbReference>
<dbReference type="PDB" id="4B4O">
    <property type="method" value="X-ray"/>
    <property type="resolution" value="2.70 A"/>
    <property type="chains" value="A/B/C/D/E/F/G/H=25-291"/>
</dbReference>
<dbReference type="PDBsum" id="4B4O"/>
<dbReference type="SMR" id="Q9NRG7"/>
<dbReference type="BioGRID" id="121272">
    <property type="interactions" value="35"/>
</dbReference>
<dbReference type="FunCoup" id="Q9NRG7">
    <property type="interactions" value="766"/>
</dbReference>
<dbReference type="IntAct" id="Q9NRG7">
    <property type="interactions" value="18"/>
</dbReference>
<dbReference type="MINT" id="Q9NRG7"/>
<dbReference type="STRING" id="9606.ENSP00000382327"/>
<dbReference type="iPTMnet" id="Q9NRG7"/>
<dbReference type="MetOSite" id="Q9NRG7"/>
<dbReference type="PhosphoSitePlus" id="Q9NRG7"/>
<dbReference type="SwissPalm" id="Q9NRG7"/>
<dbReference type="BioMuta" id="SDR39U1"/>
<dbReference type="DMDM" id="269849556"/>
<dbReference type="jPOST" id="Q9NRG7"/>
<dbReference type="MassIVE" id="Q9NRG7"/>
<dbReference type="PaxDb" id="9606-ENSP00000382327"/>
<dbReference type="PeptideAtlas" id="Q9NRG7"/>
<dbReference type="ProteomicsDB" id="82357">
    <molecule id="Q9NRG7-2"/>
</dbReference>
<dbReference type="ProteomicsDB" id="82358">
    <molecule id="Q9NRG7-3"/>
</dbReference>
<dbReference type="Pumba" id="Q9NRG7"/>
<dbReference type="Antibodypedia" id="22920">
    <property type="antibodies" value="94 antibodies from 18 providers"/>
</dbReference>
<dbReference type="DNASU" id="56948"/>
<dbReference type="Ensembl" id="ENST00000399395.8">
    <molecule id="Q9NRG7-2"/>
    <property type="protein sequence ID" value="ENSP00000382327.3"/>
    <property type="gene ID" value="ENSG00000100445.18"/>
</dbReference>
<dbReference type="GeneID" id="56948"/>
<dbReference type="KEGG" id="hsa:56948"/>
<dbReference type="MANE-Select" id="ENST00000399395.8">
    <property type="protein sequence ID" value="ENSP00000382327.3"/>
    <property type="RefSeq nucleotide sequence ID" value="NM_020195.3"/>
    <property type="RefSeq protein sequence ID" value="NP_064580.2"/>
</dbReference>
<dbReference type="UCSC" id="uc001wpm.4">
    <molecule id="Q9NRG7-2"/>
    <property type="organism name" value="human"/>
</dbReference>
<dbReference type="AGR" id="HGNC:20275"/>
<dbReference type="CTD" id="56948"/>
<dbReference type="DisGeNET" id="56948"/>
<dbReference type="GeneCards" id="SDR39U1"/>
<dbReference type="HGNC" id="HGNC:20275">
    <property type="gene designation" value="SDR39U1"/>
</dbReference>
<dbReference type="HPA" id="ENSG00000100445">
    <property type="expression patterns" value="Low tissue specificity"/>
</dbReference>
<dbReference type="MIM" id="616162">
    <property type="type" value="gene"/>
</dbReference>
<dbReference type="neXtProt" id="NX_Q9NRG7"/>
<dbReference type="OpenTargets" id="ENSG00000100445"/>
<dbReference type="PharmGKB" id="PA164725619"/>
<dbReference type="VEuPathDB" id="HostDB:ENSG00000100445"/>
<dbReference type="eggNOG" id="KOG3019">
    <property type="taxonomic scope" value="Eukaryota"/>
</dbReference>
<dbReference type="GeneTree" id="ENSGT00390000000337"/>
<dbReference type="HOGENOM" id="CLU_047373_0_1_1"/>
<dbReference type="InParanoid" id="Q9NRG7"/>
<dbReference type="OMA" id="YLPWIHI"/>
<dbReference type="OrthoDB" id="276721at2759"/>
<dbReference type="PAN-GO" id="Q9NRG7">
    <property type="GO annotations" value="0 GO annotations based on evolutionary models"/>
</dbReference>
<dbReference type="PhylomeDB" id="Q9NRG7"/>
<dbReference type="TreeFam" id="TF324783"/>
<dbReference type="PathwayCommons" id="Q9NRG7"/>
<dbReference type="SignaLink" id="Q9NRG7"/>
<dbReference type="BioGRID-ORCS" id="56948">
    <property type="hits" value="12 hits in 1162 CRISPR screens"/>
</dbReference>
<dbReference type="EvolutionaryTrace" id="Q9NRG7"/>
<dbReference type="GenomeRNAi" id="56948"/>
<dbReference type="Pharos" id="Q9NRG7">
    <property type="development level" value="Tbio"/>
</dbReference>
<dbReference type="PRO" id="PR:Q9NRG7"/>
<dbReference type="Proteomes" id="UP000005640">
    <property type="component" value="Chromosome 14"/>
</dbReference>
<dbReference type="RNAct" id="Q9NRG7">
    <property type="molecule type" value="protein"/>
</dbReference>
<dbReference type="Bgee" id="ENSG00000100445">
    <property type="expression patterns" value="Expressed in apex of heart and 207 other cell types or tissues"/>
</dbReference>
<dbReference type="ExpressionAtlas" id="Q9NRG7">
    <property type="expression patterns" value="baseline and differential"/>
</dbReference>
<dbReference type="GO" id="GO:0005739">
    <property type="term" value="C:mitochondrion"/>
    <property type="evidence" value="ECO:0006056"/>
    <property type="project" value="FlyBase"/>
</dbReference>
<dbReference type="GO" id="GO:0005634">
    <property type="term" value="C:nucleus"/>
    <property type="evidence" value="ECO:0007005"/>
    <property type="project" value="UniProtKB"/>
</dbReference>
<dbReference type="GO" id="GO:0016491">
    <property type="term" value="F:oxidoreductase activity"/>
    <property type="evidence" value="ECO:0007669"/>
    <property type="project" value="UniProtKB-KW"/>
</dbReference>
<dbReference type="CDD" id="cd05242">
    <property type="entry name" value="SDR_a8"/>
    <property type="match status" value="1"/>
</dbReference>
<dbReference type="FunFam" id="3.40.50.720:FF:000471">
    <property type="entry name" value="epimerase family protein SDR39U1 isoform X1"/>
    <property type="match status" value="1"/>
</dbReference>
<dbReference type="Gene3D" id="3.40.50.720">
    <property type="entry name" value="NAD(P)-binding Rossmann-like Domain"/>
    <property type="match status" value="1"/>
</dbReference>
<dbReference type="InterPro" id="IPR013549">
    <property type="entry name" value="DUF1731"/>
</dbReference>
<dbReference type="InterPro" id="IPR001509">
    <property type="entry name" value="Epimerase_deHydtase"/>
</dbReference>
<dbReference type="InterPro" id="IPR036291">
    <property type="entry name" value="NAD(P)-bd_dom_sf"/>
</dbReference>
<dbReference type="InterPro" id="IPR010099">
    <property type="entry name" value="SDR39U1"/>
</dbReference>
<dbReference type="NCBIfam" id="TIGR01777">
    <property type="entry name" value="yfcH"/>
    <property type="match status" value="1"/>
</dbReference>
<dbReference type="PANTHER" id="PTHR11092:SF0">
    <property type="entry name" value="EPIMERASE FAMILY PROTEIN SDR39U1"/>
    <property type="match status" value="1"/>
</dbReference>
<dbReference type="PANTHER" id="PTHR11092">
    <property type="entry name" value="SUGAR NUCLEOTIDE EPIMERASE RELATED"/>
    <property type="match status" value="1"/>
</dbReference>
<dbReference type="Pfam" id="PF08338">
    <property type="entry name" value="DUF1731"/>
    <property type="match status" value="1"/>
</dbReference>
<dbReference type="Pfam" id="PF01370">
    <property type="entry name" value="Epimerase"/>
    <property type="match status" value="1"/>
</dbReference>
<dbReference type="SUPFAM" id="SSF51735">
    <property type="entry name" value="NAD(P)-binding Rossmann-fold domains"/>
    <property type="match status" value="1"/>
</dbReference>
<proteinExistence type="evidence at protein level"/>
<gene>
    <name type="primary">SDR39U1</name>
    <name type="synonym">C14orf124</name>
    <name type="synonym">HCDI</name>
</gene>